<protein>
    <recommendedName>
        <fullName evidence="1">Potassium/proton antiporter CemA</fullName>
    </recommendedName>
    <alternativeName>
        <fullName evidence="1">Chloroplast envelope membrane protein A</fullName>
        <shortName evidence="1">CemA</shortName>
    </alternativeName>
</protein>
<gene>
    <name evidence="1" type="primary">cemA</name>
</gene>
<reference key="1">
    <citation type="journal article" date="2006" name="BMC Plant Biol.">
        <title>Rapid and accurate pyrosequencing of angiosperm plastid genomes.</title>
        <authorList>
            <person name="Moore M.J."/>
            <person name="Dhingra A."/>
            <person name="Soltis P.S."/>
            <person name="Shaw R."/>
            <person name="Farmerie W.G."/>
            <person name="Folta K.M."/>
            <person name="Soltis D.E."/>
        </authorList>
    </citation>
    <scope>NUCLEOTIDE SEQUENCE [LARGE SCALE GENOMIC DNA]</scope>
</reference>
<proteinExistence type="inferred from homology"/>
<geneLocation type="chloroplast"/>
<name>CEMA_NANDO</name>
<accession>Q09FU9</accession>
<dbReference type="EMBL" id="DQ923117">
    <property type="protein sequence ID" value="ABI49875.1"/>
    <property type="molecule type" value="Genomic_DNA"/>
</dbReference>
<dbReference type="RefSeq" id="YP_740662.1">
    <property type="nucleotide sequence ID" value="NC_008336.1"/>
</dbReference>
<dbReference type="GeneID" id="4271608"/>
<dbReference type="GO" id="GO:0009706">
    <property type="term" value="C:chloroplast inner membrane"/>
    <property type="evidence" value="ECO:0007669"/>
    <property type="project" value="UniProtKB-SubCell"/>
</dbReference>
<dbReference type="GO" id="GO:0015297">
    <property type="term" value="F:antiporter activity"/>
    <property type="evidence" value="ECO:0007669"/>
    <property type="project" value="UniProtKB-KW"/>
</dbReference>
<dbReference type="GO" id="GO:0015078">
    <property type="term" value="F:proton transmembrane transporter activity"/>
    <property type="evidence" value="ECO:0007669"/>
    <property type="project" value="UniProtKB-UniRule"/>
</dbReference>
<dbReference type="GO" id="GO:0006813">
    <property type="term" value="P:potassium ion transport"/>
    <property type="evidence" value="ECO:0007669"/>
    <property type="project" value="UniProtKB-UniRule"/>
</dbReference>
<dbReference type="HAMAP" id="MF_01308">
    <property type="entry name" value="CemA_PxcA"/>
    <property type="match status" value="1"/>
</dbReference>
<dbReference type="InterPro" id="IPR004282">
    <property type="entry name" value="CemA"/>
</dbReference>
<dbReference type="PANTHER" id="PTHR33650:SF2">
    <property type="entry name" value="CHLOROPLAST ENVELOPE MEMBRANE PROTEIN"/>
    <property type="match status" value="1"/>
</dbReference>
<dbReference type="PANTHER" id="PTHR33650">
    <property type="entry name" value="CHLOROPLAST ENVELOPE MEMBRANE PROTEIN-RELATED"/>
    <property type="match status" value="1"/>
</dbReference>
<dbReference type="Pfam" id="PF03040">
    <property type="entry name" value="CemA"/>
    <property type="match status" value="1"/>
</dbReference>
<feature type="chain" id="PRO_0000293521" description="Potassium/proton antiporter CemA">
    <location>
        <begin position="1"/>
        <end position="229"/>
    </location>
</feature>
<feature type="transmembrane region" description="Helical" evidence="1">
    <location>
        <begin position="7"/>
        <end position="27"/>
    </location>
</feature>
<feature type="transmembrane region" description="Helical" evidence="1">
    <location>
        <begin position="114"/>
        <end position="134"/>
    </location>
</feature>
<feature type="transmembrane region" description="Helical" evidence="1">
    <location>
        <begin position="154"/>
        <end position="174"/>
    </location>
</feature>
<feature type="transmembrane region" description="Helical" evidence="1">
    <location>
        <begin position="189"/>
        <end position="209"/>
    </location>
</feature>
<evidence type="ECO:0000255" key="1">
    <source>
        <dbReference type="HAMAP-Rule" id="MF_01308"/>
    </source>
</evidence>
<evidence type="ECO:0000305" key="2"/>
<keyword id="KW-0050">Antiport</keyword>
<keyword id="KW-0150">Chloroplast</keyword>
<keyword id="KW-0375">Hydrogen ion transport</keyword>
<keyword id="KW-0406">Ion transport</keyword>
<keyword id="KW-0472">Membrane</keyword>
<keyword id="KW-0934">Plastid</keyword>
<keyword id="KW-1001">Plastid inner membrane</keyword>
<keyword id="KW-0630">Potassium</keyword>
<keyword id="KW-0633">Potassium transport</keyword>
<keyword id="KW-0812">Transmembrane</keyword>
<keyword id="KW-1133">Transmembrane helix</keyword>
<keyword id="KW-0813">Transport</keyword>
<comment type="function">
    <text evidence="1">Contributes to K(+)/H(+) antiport activity by supporting proton efflux to control proton extrusion and homeostasis in chloroplasts in a light-dependent manner to modulate photosynthesis. Prevents excessive induction of non-photochemical quenching (NPQ) under continuous-light conditions. Indirectly promotes efficient inorganic carbon uptake into chloroplasts.</text>
</comment>
<comment type="catalytic activity">
    <reaction evidence="1">
        <text>K(+)(in) + H(+)(out) = K(+)(out) + H(+)(in)</text>
        <dbReference type="Rhea" id="RHEA:29467"/>
        <dbReference type="ChEBI" id="CHEBI:15378"/>
        <dbReference type="ChEBI" id="CHEBI:29103"/>
    </reaction>
</comment>
<comment type="subcellular location">
    <subcellularLocation>
        <location evidence="1">Plastid</location>
        <location evidence="1">Chloroplast inner membrane</location>
        <topology evidence="1">Multi-pass membrane protein</topology>
    </subcellularLocation>
</comment>
<comment type="similarity">
    <text evidence="1 2">Belongs to the CemA family.</text>
</comment>
<sequence>MTKKKAFTPLPYLASIVFLPWWISFSFNKSLESWVIHWWNTSQPEAFLNDIQEKNVLEKFIELEELFLLDEMIKEYPKTHIQKFRIGIHKETIQLVKMHNEGHIHTFLQFSTNIISFAILSGYSILGNEELVVLNSWIREFLYNLSDTIKAFSILLLTDLCIGFHSPHGWELMIDFVYKDFGFSHNDQIISGLVSTFPVILDTIFKYWIFRYLNRVSPSLVVIYHSMND</sequence>
<organism>
    <name type="scientific">Nandina domestica</name>
    <name type="common">Heavenly bamboo</name>
    <dbReference type="NCBI Taxonomy" id="41776"/>
    <lineage>
        <taxon>Eukaryota</taxon>
        <taxon>Viridiplantae</taxon>
        <taxon>Streptophyta</taxon>
        <taxon>Embryophyta</taxon>
        <taxon>Tracheophyta</taxon>
        <taxon>Spermatophyta</taxon>
        <taxon>Magnoliopsida</taxon>
        <taxon>Ranunculales</taxon>
        <taxon>Berberidaceae</taxon>
        <taxon>Nandinoideae</taxon>
        <taxon>Nandineae</taxon>
        <taxon>Nandina</taxon>
    </lineage>
</organism>